<proteinExistence type="evidence at transcript level"/>
<feature type="chain" id="PRO_0000357051" description="Histone deacetylase 5">
    <location>
        <begin position="1"/>
        <end position="1122"/>
    </location>
</feature>
<feature type="region of interest" description="Disordered" evidence="4">
    <location>
        <begin position="1"/>
        <end position="22"/>
    </location>
</feature>
<feature type="region of interest" description="Disordered" evidence="4">
    <location>
        <begin position="196"/>
        <end position="281"/>
    </location>
</feature>
<feature type="region of interest" description="Disordered" evidence="4">
    <location>
        <begin position="302"/>
        <end position="343"/>
    </location>
</feature>
<feature type="region of interest" description="Disordered" evidence="4">
    <location>
        <begin position="481"/>
        <end position="504"/>
    </location>
</feature>
<feature type="region of interest" description="Disordered" evidence="4">
    <location>
        <begin position="536"/>
        <end position="625"/>
    </location>
</feature>
<feature type="region of interest" description="Histone deacetylase">
    <location>
        <begin position="684"/>
        <end position="1028"/>
    </location>
</feature>
<feature type="region of interest" description="Disordered" evidence="4">
    <location>
        <begin position="1097"/>
        <end position="1122"/>
    </location>
</feature>
<feature type="short sequence motif" description="Nuclear export signal" evidence="1">
    <location>
        <begin position="1081"/>
        <end position="1122"/>
    </location>
</feature>
<feature type="compositionally biased region" description="Basic and acidic residues" evidence="4">
    <location>
        <begin position="247"/>
        <end position="258"/>
    </location>
</feature>
<feature type="compositionally biased region" description="Basic and acidic residues" evidence="4">
    <location>
        <begin position="272"/>
        <end position="281"/>
    </location>
</feature>
<feature type="compositionally biased region" description="Low complexity" evidence="4">
    <location>
        <begin position="312"/>
        <end position="327"/>
    </location>
</feature>
<feature type="compositionally biased region" description="Polar residues" evidence="4">
    <location>
        <begin position="328"/>
        <end position="340"/>
    </location>
</feature>
<feature type="compositionally biased region" description="Low complexity" evidence="4">
    <location>
        <begin position="494"/>
        <end position="504"/>
    </location>
</feature>
<feature type="compositionally biased region" description="Acidic residues" evidence="4">
    <location>
        <begin position="581"/>
        <end position="621"/>
    </location>
</feature>
<feature type="compositionally biased region" description="Basic and acidic residues" evidence="4">
    <location>
        <begin position="1104"/>
        <end position="1113"/>
    </location>
</feature>
<feature type="active site" evidence="1">
    <location>
        <position position="833"/>
    </location>
</feature>
<feature type="binding site" evidence="1">
    <location>
        <position position="696"/>
    </location>
    <ligand>
        <name>Zn(2+)</name>
        <dbReference type="ChEBI" id="CHEBI:29105"/>
    </ligand>
</feature>
<feature type="binding site" evidence="1">
    <location>
        <position position="698"/>
    </location>
    <ligand>
        <name>Zn(2+)</name>
        <dbReference type="ChEBI" id="CHEBI:29105"/>
    </ligand>
</feature>
<feature type="binding site" evidence="1">
    <location>
        <position position="704"/>
    </location>
    <ligand>
        <name>Zn(2+)</name>
        <dbReference type="ChEBI" id="CHEBI:29105"/>
    </ligand>
</feature>
<feature type="binding site" evidence="1">
    <location>
        <position position="781"/>
    </location>
    <ligand>
        <name>Zn(2+)</name>
        <dbReference type="ChEBI" id="CHEBI:29105"/>
    </ligand>
</feature>
<feature type="modified residue" description="Phosphoserine; by AMPK, CaMK1, SIK1 and PKD/PRKD1" evidence="2">
    <location>
        <position position="259"/>
    </location>
</feature>
<feature type="modified residue" description="Phosphothreonine; by PKC" evidence="2">
    <location>
        <position position="292"/>
    </location>
</feature>
<feature type="modified residue" description="Phosphoserine; by AMPK, CaMK1, SIK1 and PKD/PRKD1" evidence="2">
    <location>
        <position position="498"/>
    </location>
</feature>
<feature type="modified residue" description="N6-acetyllysine" evidence="2">
    <location>
        <position position="533"/>
    </location>
</feature>
<feature type="modified residue" description="Phosphoserine" evidence="2">
    <location>
        <position position="611"/>
    </location>
</feature>
<feature type="modified residue" description="Phosphoserine" evidence="2">
    <location>
        <position position="661"/>
    </location>
</feature>
<feature type="modified residue" description="Phosphoserine" evidence="2">
    <location>
        <position position="1108"/>
    </location>
</feature>
<feature type="cross-link" description="Glycyl lysine isopeptide (Lys-Gly) (interchain with G-Cter in SUMO2)" evidence="2">
    <location>
        <position position="35"/>
    </location>
</feature>
<comment type="function">
    <text evidence="2">Responsible for the deacetylation of lysine residues on the N-terminal part of the core histones (H2A, H2B, H3 and H4). Histone deacetylation gives a tag for epigenetic repression and plays an important role in transcriptional regulation, cell cycle progression and developmental events. Histone deacetylases act via the formation of large multiprotein complexes. Involved in muscle maturation by repressing transcription of myocyte enhancer MEF2C. During muscle differentiation, it shuttles into the cytoplasm, allowing the expression of myocyte enhancer factors (By similarity). Serves as a corepressor of RARA and causes its deacetylation (By similarity). In association with RARA, plays a role in the repression of microRNA-10a and thereby in the inflammatory response (By similarity).</text>
</comment>
<comment type="catalytic activity">
    <reaction>
        <text>N(6)-acetyl-L-lysyl-[histone] + H2O = L-lysyl-[histone] + acetate</text>
        <dbReference type="Rhea" id="RHEA:58196"/>
        <dbReference type="Rhea" id="RHEA-COMP:9845"/>
        <dbReference type="Rhea" id="RHEA-COMP:11338"/>
        <dbReference type="ChEBI" id="CHEBI:15377"/>
        <dbReference type="ChEBI" id="CHEBI:29969"/>
        <dbReference type="ChEBI" id="CHEBI:30089"/>
        <dbReference type="ChEBI" id="CHEBI:61930"/>
        <dbReference type="EC" id="3.5.1.98"/>
    </reaction>
</comment>
<comment type="subunit">
    <text evidence="2 3">Interacts with AHRR, BAHD1, BCOR, HDAC7, HDAC9, CTBP1, MEF2C, NCOR2, NRIP1, PHB2 and a 14-3-3 chaperone protein. Interacts with BCL6, DDIT3/CHOP, GRK5, KDM5B and MYOCD. Interacts with EP300 in the presence of TFAP2C. Interacts with ANKRA2. Interacts with CUL7 (as part of the 3M complex); negatively regulated by ANKRA2. Interacts with ZBTB7B; the interaction allows the recruitment of HDAC4 on CD8 loci for deacetylation and possible inhibition of CD8 genes expression (By similarity). Interacts with RARA (By similarity).</text>
</comment>
<comment type="subcellular location">
    <subcellularLocation>
        <location evidence="1">Nucleus</location>
    </subcellularLocation>
    <subcellularLocation>
        <location evidence="1">Cytoplasm</location>
    </subcellularLocation>
    <text evidence="1">Shuttles between the nucleus and the cytoplasm. In muscle cells, it shuttles into the cytoplasm during myocyte differentiation. The export to cytoplasm depends on the interaction with a 14-3-3 chaperone protein and is due to its phosphorylation at Ser-259 and Ser-498 by AMPK, CaMK1 and SIK1 (By similarity).</text>
</comment>
<comment type="domain">
    <text>The nuclear export sequence mediates the shuttling between the nucleus and the cytoplasm.</text>
</comment>
<comment type="PTM">
    <text evidence="1">Phosphorylated by AMPK, CaMK1, SIK1 and PRKD1 at Ser-259 and Ser-498. The phosphorylation is required for the export to the cytoplasm and inhibition. Phosphorylated by the PKC kinases PKN1 and PKN2, impairing nuclear import (By similarity). Phosphorylated by GRK5, leading to nuclear export of HDAC5 and allowing MEF2-mediated transcription (By similarity).</text>
</comment>
<comment type="PTM">
    <text evidence="1">Ubiquitinated. Polyubiquitination however does not lead to its degradation (By similarity).</text>
</comment>
<comment type="similarity">
    <text evidence="5">Belongs to the histone deacetylase family. HD type 2 subfamily.</text>
</comment>
<keyword id="KW-0007">Acetylation</keyword>
<keyword id="KW-0156">Chromatin regulator</keyword>
<keyword id="KW-0963">Cytoplasm</keyword>
<keyword id="KW-0378">Hydrolase</keyword>
<keyword id="KW-1017">Isopeptide bond</keyword>
<keyword id="KW-0479">Metal-binding</keyword>
<keyword id="KW-0539">Nucleus</keyword>
<keyword id="KW-0597">Phosphoprotein</keyword>
<keyword id="KW-1185">Reference proteome</keyword>
<keyword id="KW-0678">Repressor</keyword>
<keyword id="KW-0804">Transcription</keyword>
<keyword id="KW-0805">Transcription regulation</keyword>
<keyword id="KW-0832">Ubl conjugation</keyword>
<keyword id="KW-0862">Zinc</keyword>
<protein>
    <recommendedName>
        <fullName>Histone deacetylase 5</fullName>
        <shortName>HD5</shortName>
        <ecNumber>3.5.1.98</ecNumber>
    </recommendedName>
</protein>
<organism>
    <name type="scientific">Pongo abelii</name>
    <name type="common">Sumatran orangutan</name>
    <name type="synonym">Pongo pygmaeus abelii</name>
    <dbReference type="NCBI Taxonomy" id="9601"/>
    <lineage>
        <taxon>Eukaryota</taxon>
        <taxon>Metazoa</taxon>
        <taxon>Chordata</taxon>
        <taxon>Craniata</taxon>
        <taxon>Vertebrata</taxon>
        <taxon>Euteleostomi</taxon>
        <taxon>Mammalia</taxon>
        <taxon>Eutheria</taxon>
        <taxon>Euarchontoglires</taxon>
        <taxon>Primates</taxon>
        <taxon>Haplorrhini</taxon>
        <taxon>Catarrhini</taxon>
        <taxon>Hominidae</taxon>
        <taxon>Pongo</taxon>
    </lineage>
</organism>
<dbReference type="EC" id="3.5.1.98"/>
<dbReference type="EMBL" id="CR859595">
    <property type="protein sequence ID" value="CAH91758.1"/>
    <property type="molecule type" value="mRNA"/>
</dbReference>
<dbReference type="SMR" id="Q5R902"/>
<dbReference type="FunCoup" id="Q5R902">
    <property type="interactions" value="2868"/>
</dbReference>
<dbReference type="STRING" id="9601.ENSPPYP00000009379"/>
<dbReference type="eggNOG" id="KOG1343">
    <property type="taxonomic scope" value="Eukaryota"/>
</dbReference>
<dbReference type="InParanoid" id="Q5R902"/>
<dbReference type="Proteomes" id="UP000001595">
    <property type="component" value="Unplaced"/>
</dbReference>
<dbReference type="GO" id="GO:0005737">
    <property type="term" value="C:cytoplasm"/>
    <property type="evidence" value="ECO:0000250"/>
    <property type="project" value="UniProtKB"/>
</dbReference>
<dbReference type="GO" id="GO:0005634">
    <property type="term" value="C:nucleus"/>
    <property type="evidence" value="ECO:0000250"/>
    <property type="project" value="UniProtKB"/>
</dbReference>
<dbReference type="GO" id="GO:0141221">
    <property type="term" value="F:histone deacetylase activity, hydrolytic mechanism"/>
    <property type="evidence" value="ECO:0007669"/>
    <property type="project" value="UniProtKB-EC"/>
</dbReference>
<dbReference type="GO" id="GO:0046872">
    <property type="term" value="F:metal ion binding"/>
    <property type="evidence" value="ECO:0007669"/>
    <property type="project" value="UniProtKB-KW"/>
</dbReference>
<dbReference type="GO" id="GO:0006325">
    <property type="term" value="P:chromatin organization"/>
    <property type="evidence" value="ECO:0007669"/>
    <property type="project" value="UniProtKB-KW"/>
</dbReference>
<dbReference type="GO" id="GO:0000122">
    <property type="term" value="P:negative regulation of transcription by RNA polymerase II"/>
    <property type="evidence" value="ECO:0007669"/>
    <property type="project" value="InterPro"/>
</dbReference>
<dbReference type="GO" id="GO:0010830">
    <property type="term" value="P:regulation of myotube differentiation"/>
    <property type="evidence" value="ECO:0000250"/>
    <property type="project" value="UniProtKB"/>
</dbReference>
<dbReference type="CDD" id="cd10164">
    <property type="entry name" value="ClassIIa_HDAC5_Gln-rich-N"/>
    <property type="match status" value="1"/>
</dbReference>
<dbReference type="FunFam" id="3.40.800.20:FF:000002">
    <property type="entry name" value="Histone deacetylase"/>
    <property type="match status" value="1"/>
</dbReference>
<dbReference type="Gene3D" id="6.10.250.1550">
    <property type="match status" value="1"/>
</dbReference>
<dbReference type="Gene3D" id="3.40.800.20">
    <property type="entry name" value="Histone deacetylase domain"/>
    <property type="match status" value="1"/>
</dbReference>
<dbReference type="InterPro" id="IPR046949">
    <property type="entry name" value="HDAC4/5/7/9"/>
</dbReference>
<dbReference type="InterPro" id="IPR000286">
    <property type="entry name" value="His_deacetylse"/>
</dbReference>
<dbReference type="InterPro" id="IPR023801">
    <property type="entry name" value="His_deacetylse_dom"/>
</dbReference>
<dbReference type="InterPro" id="IPR037138">
    <property type="entry name" value="His_deacetylse_dom_sf"/>
</dbReference>
<dbReference type="InterPro" id="IPR024643">
    <property type="entry name" value="Hist_deacetylase_Gln_rich_N"/>
</dbReference>
<dbReference type="InterPro" id="IPR023696">
    <property type="entry name" value="Ureohydrolase_dom_sf"/>
</dbReference>
<dbReference type="PANTHER" id="PTHR45364:SF12">
    <property type="entry name" value="HISTONE DEACETYLASE"/>
    <property type="match status" value="1"/>
</dbReference>
<dbReference type="PANTHER" id="PTHR45364">
    <property type="entry name" value="HISTONE DEACETYLASE 9-RELATED"/>
    <property type="match status" value="1"/>
</dbReference>
<dbReference type="Pfam" id="PF12203">
    <property type="entry name" value="HDAC4_Gln"/>
    <property type="match status" value="1"/>
</dbReference>
<dbReference type="Pfam" id="PF00850">
    <property type="entry name" value="Hist_deacetyl"/>
    <property type="match status" value="1"/>
</dbReference>
<dbReference type="PIRSF" id="PIRSF037911">
    <property type="entry name" value="HDAC_II_euk"/>
    <property type="match status" value="1"/>
</dbReference>
<dbReference type="PRINTS" id="PR01270">
    <property type="entry name" value="HDASUPER"/>
</dbReference>
<dbReference type="SUPFAM" id="SSF52768">
    <property type="entry name" value="Arginase/deacetylase"/>
    <property type="match status" value="1"/>
</dbReference>
<accession>Q5R902</accession>
<evidence type="ECO:0000250" key="1"/>
<evidence type="ECO:0000250" key="2">
    <source>
        <dbReference type="UniProtKB" id="Q9UQL6"/>
    </source>
</evidence>
<evidence type="ECO:0000250" key="3">
    <source>
        <dbReference type="UniProtKB" id="Q9Z2V6"/>
    </source>
</evidence>
<evidence type="ECO:0000256" key="4">
    <source>
        <dbReference type="SAM" id="MobiDB-lite"/>
    </source>
</evidence>
<evidence type="ECO:0000305" key="5"/>
<reference key="1">
    <citation type="submission" date="2004-11" db="EMBL/GenBank/DDBJ databases">
        <authorList>
            <consortium name="The German cDNA consortium"/>
        </authorList>
    </citation>
    <scope>NUCLEOTIDE SEQUENCE [LARGE SCALE MRNA]</scope>
    <source>
        <tissue>Brain cortex</tissue>
    </source>
</reference>
<name>HDAC5_PONAB</name>
<gene>
    <name type="primary">HDAC5</name>
</gene>
<sequence>MNSPNESDGMSGREPSLEILPRTSLHSIPVTVEVKPVLPRAMPSSMGGGGGGSPSPVELRGALVGSVDPTLREQLLQQELLALKQQQQLQKQLLFAEFQKQHDHLTRQHEVQLQKHLKQQQEMLAAKQQQEMLAAKRQQELEQQRQREQQRQEELEKQRLEQQLLILRNKEKSKESAIASTEVKLRLQEFLLSKSKEPTPGGLNHSLPQHPKCWGAHHASLDQSSPPQSGPPGTPPSYKLPLPGPYDSRDDFPLRKTASEPNLKVRSRLKQKVAERRSSPLLRRKDGTVISTFKKRAVEITGAGPGASSVCNSAPGSGPSSPNSSHSTIAENGFTGSVPNIPTEMLPQHRALPLDSSSNQFSLYTSPSLPNISLGLQATVTVTNSHLTASPKLSTQQEAERQALQSLRQGGTLTGKFMSTSSIPGCLLGVALEGDGSPHGHASLLQHVLLLEQARQQSTLIAVPLHGQSPLVTGERVATSMRTVGKLPRHRPLSRTQSSPLPQSPQALQQLVMQQQHQQFLEKQKQQQLQLGKILTKTGELPRQPTTHPEETEEELTEQQEALLGEGALTMPREGSTESESTQEDLEEEDEEEDGEEEEDCIQVKDEEGESGAEEGPDLEEPGAGYKKLFSDAQPLQPLQVYQAPLSLATVPHQALGRTQSSPAAPGGMKSPPDQPVKHLFTTGVVYDTFMLKHQCMCGNTHVHPEHAGRIQSTWSRLQETGLLSKCERIRGRKATLDEIQTVHSEYHTLLYGTSPLNRQKVDSKKLLGPISQKMYAVLPCGGIGVDSDTVWNEMHSSSAVRMAVGCLLELAFKVAAGELKNGFAIIRPPGHHAEESTAMGFCFFNSVAITAKLLQQKLNVGKVLIVDWDIHHGNGTQQAFYNDPSVLYISLHRYDNGNFFPGSGAPEEVGGGPGVGYNVNVAWIGGVDPPIGDVEYLTAFRTVVMPIAHEFSPDVVLVSAGFDAVEGHLSPLGGYSVTARCFGHLTRQLMTLAGGRVVLALEGGHDLTAICDASEACVSALLSVELQPLDEAVLQQKPNINAVATLEKVIEIQSKHWSCVQKFAAGLGRSLREAQAGETEEAETVSAMALLSVGAEQAQAAAAREHSPRPAEEPMEQEPAL</sequence>